<gene>
    <name evidence="2" type="primary">slc38a7</name>
</gene>
<dbReference type="EMBL" id="BC076791">
    <property type="protein sequence ID" value="AAH76791.1"/>
    <property type="molecule type" value="mRNA"/>
</dbReference>
<dbReference type="RefSeq" id="NP_001091398.1">
    <property type="nucleotide sequence ID" value="NM_001097929.1"/>
</dbReference>
<dbReference type="SMR" id="Q6DFE7"/>
<dbReference type="DNASU" id="100049087"/>
<dbReference type="GeneID" id="100049087"/>
<dbReference type="KEGG" id="xla:100049087"/>
<dbReference type="AGR" id="Xenbase:XB-GENE-5872358"/>
<dbReference type="CTD" id="100049087"/>
<dbReference type="Xenbase" id="XB-GENE-5872358">
    <property type="gene designation" value="slc38a7.L"/>
</dbReference>
<dbReference type="OrthoDB" id="438545at2759"/>
<dbReference type="Proteomes" id="UP000186698">
    <property type="component" value="Chromosome 4L"/>
</dbReference>
<dbReference type="Bgee" id="100049087">
    <property type="expression patterns" value="Expressed in egg cell and 18 other cell types or tissues"/>
</dbReference>
<dbReference type="GO" id="GO:0030424">
    <property type="term" value="C:axon"/>
    <property type="evidence" value="ECO:0007669"/>
    <property type="project" value="UniProtKB-SubCell"/>
</dbReference>
<dbReference type="GO" id="GO:0005765">
    <property type="term" value="C:lysosomal membrane"/>
    <property type="evidence" value="ECO:0000250"/>
    <property type="project" value="UniProtKB"/>
</dbReference>
<dbReference type="GO" id="GO:0016020">
    <property type="term" value="C:membrane"/>
    <property type="evidence" value="ECO:0000318"/>
    <property type="project" value="GO_Central"/>
</dbReference>
<dbReference type="GO" id="GO:0015182">
    <property type="term" value="F:L-asparagine transmembrane transporter activity"/>
    <property type="evidence" value="ECO:0000318"/>
    <property type="project" value="GO_Central"/>
</dbReference>
<dbReference type="GO" id="GO:0140901">
    <property type="term" value="F:L-asparagine:sodium symporter activity"/>
    <property type="evidence" value="ECO:0000250"/>
    <property type="project" value="UniProtKB"/>
</dbReference>
<dbReference type="GO" id="GO:0015186">
    <property type="term" value="F:L-glutamine transmembrane transporter activity"/>
    <property type="evidence" value="ECO:0000318"/>
    <property type="project" value="GO_Central"/>
</dbReference>
<dbReference type="GO" id="GO:0140902">
    <property type="term" value="F:L-glutamine:sodium symporter activity"/>
    <property type="evidence" value="ECO:0000250"/>
    <property type="project" value="UniProtKB"/>
</dbReference>
<dbReference type="GO" id="GO:0003333">
    <property type="term" value="P:amino acid transmembrane transport"/>
    <property type="evidence" value="ECO:0000318"/>
    <property type="project" value="GO_Central"/>
</dbReference>
<dbReference type="GO" id="GO:0006867">
    <property type="term" value="P:asparagine transport"/>
    <property type="evidence" value="ECO:0000250"/>
    <property type="project" value="UniProtKB"/>
</dbReference>
<dbReference type="GO" id="GO:0006868">
    <property type="term" value="P:glutamine transport"/>
    <property type="evidence" value="ECO:0000250"/>
    <property type="project" value="UniProtKB"/>
</dbReference>
<dbReference type="FunFam" id="1.20.1740.10:FF:000038">
    <property type="entry name" value="Putative sodium-coupled neutral amino acid transporter 7"/>
    <property type="match status" value="1"/>
</dbReference>
<dbReference type="InterPro" id="IPR013057">
    <property type="entry name" value="AA_transpt_TM"/>
</dbReference>
<dbReference type="PANTHER" id="PTHR22950">
    <property type="entry name" value="AMINO ACID TRANSPORTER"/>
    <property type="match status" value="1"/>
</dbReference>
<dbReference type="PANTHER" id="PTHR22950:SF192">
    <property type="entry name" value="SODIUM-COUPLED NEUTRAL AMINO ACID TRANSPORTER 7"/>
    <property type="match status" value="1"/>
</dbReference>
<dbReference type="Pfam" id="PF01490">
    <property type="entry name" value="Aa_trans"/>
    <property type="match status" value="1"/>
</dbReference>
<evidence type="ECO:0000250" key="1">
    <source>
        <dbReference type="UniProtKB" id="Q8BWH0"/>
    </source>
</evidence>
<evidence type="ECO:0000250" key="2">
    <source>
        <dbReference type="UniProtKB" id="Q9NVC3"/>
    </source>
</evidence>
<evidence type="ECO:0000255" key="3"/>
<evidence type="ECO:0000305" key="4"/>
<proteinExistence type="evidence at transcript level"/>
<comment type="function">
    <text evidence="2">Symporter that selectively cotransports sodium ions and amino acids, such as L-glutamine and L-asparagine from the lysosome into the cytoplasm and may participates in mTORC1 activation. The transport activity requires an acidic lysosomal lumen.</text>
</comment>
<comment type="catalytic activity">
    <reaction evidence="2">
        <text>L-asparagine(in) + Na(+)(in) = L-asparagine(out) + Na(+)(out)</text>
        <dbReference type="Rhea" id="RHEA:71383"/>
        <dbReference type="ChEBI" id="CHEBI:29101"/>
        <dbReference type="ChEBI" id="CHEBI:58048"/>
    </reaction>
</comment>
<comment type="catalytic activity">
    <reaction evidence="2">
        <text>L-glutamine(in) + Na(+)(in) = L-glutamine(out) + Na(+)(out)</text>
        <dbReference type="Rhea" id="RHEA:68236"/>
        <dbReference type="ChEBI" id="CHEBI:29101"/>
        <dbReference type="ChEBI" id="CHEBI:58359"/>
    </reaction>
</comment>
<comment type="subcellular location">
    <subcellularLocation>
        <location evidence="2">Lysosome membrane</location>
        <topology evidence="3">Multi-pass membrane protein</topology>
    </subcellularLocation>
    <subcellularLocation>
        <location evidence="1">Cell projection</location>
        <location evidence="1">Axon</location>
    </subcellularLocation>
    <text evidence="1">In neurons, located in soma.</text>
</comment>
<comment type="similarity">
    <text evidence="4">Belongs to the amino acid/polyamine transporter 2 family.</text>
</comment>
<keyword id="KW-0029">Amino-acid transport</keyword>
<keyword id="KW-0966">Cell projection</keyword>
<keyword id="KW-0406">Ion transport</keyword>
<keyword id="KW-0458">Lysosome</keyword>
<keyword id="KW-0472">Membrane</keyword>
<keyword id="KW-1185">Reference proteome</keyword>
<keyword id="KW-0915">Sodium</keyword>
<keyword id="KW-0739">Sodium transport</keyword>
<keyword id="KW-0812">Transmembrane</keyword>
<keyword id="KW-1133">Transmembrane helix</keyword>
<keyword id="KW-0813">Transport</keyword>
<reference key="1">
    <citation type="submission" date="2004-07" db="EMBL/GenBank/DDBJ databases">
        <authorList>
            <consortium name="NIH - Xenopus Gene Collection (XGC) project"/>
        </authorList>
    </citation>
    <scope>NUCLEOTIDE SEQUENCE [LARGE SCALE MRNA]</scope>
    <source>
        <tissue>Oocyte</tissue>
    </source>
</reference>
<accession>Q6DFE7</accession>
<organism>
    <name type="scientific">Xenopus laevis</name>
    <name type="common">African clawed frog</name>
    <dbReference type="NCBI Taxonomy" id="8355"/>
    <lineage>
        <taxon>Eukaryota</taxon>
        <taxon>Metazoa</taxon>
        <taxon>Chordata</taxon>
        <taxon>Craniata</taxon>
        <taxon>Vertebrata</taxon>
        <taxon>Euteleostomi</taxon>
        <taxon>Amphibia</taxon>
        <taxon>Batrachia</taxon>
        <taxon>Anura</taxon>
        <taxon>Pipoidea</taxon>
        <taxon>Pipidae</taxon>
        <taxon>Xenopodinae</taxon>
        <taxon>Xenopus</taxon>
        <taxon>Xenopus</taxon>
    </lineage>
</organism>
<name>S38A7_XENLA</name>
<protein>
    <recommendedName>
        <fullName evidence="2">Sodium-coupled neutral amino acid transporter 7</fullName>
    </recommendedName>
    <alternativeName>
        <fullName>Solute carrier family 38 member 7</fullName>
    </alternativeName>
</protein>
<sequence>MSLGNVGINADYSWDAGERARLLQSPSVGTSPELRRLAGGTSPAGAVFIVVNAALGAGLLNFPAAFNAAGGITAAISLQLVLLLFIISGLVILAHCADACSERTYQEVVRGVCGRTAGVLCEVLIAVYTFGTCIAFFIIIGDQLDKLLGAMMHTTAESPVPWYADRKFTISVTGVLLILPLSLPREISVQRYASFLSVLGTCYVTVVVVVRCIWPDTTIPSHEISSSSSSWLAVFNAVPTICFGYQCHVSSVPVYGSMQQQDIRRWGYIVTIAMFIALCVYTGTGVCGFLLFGSDVDQDVLLSFPSDDIAVAVARAFIILCVLTSYPILHYCGRAVLEGLWLRFTSQEPGEEPSKERRRRVLQTVIWFLLTLLLALFIPDIGRVISLIGGLAACFIFIFPGLCLIHLKLSEIHEHKSKSWWALLSYGVIMVTIGTFIFGQTTTKAIFVDLVG</sequence>
<feature type="chain" id="PRO_0000319602" description="Sodium-coupled neutral amino acid transporter 7">
    <location>
        <begin position="1"/>
        <end position="452"/>
    </location>
</feature>
<feature type="transmembrane region" description="Helical" evidence="3">
    <location>
        <begin position="46"/>
        <end position="66"/>
    </location>
</feature>
<feature type="transmembrane region" description="Helical" evidence="3">
    <location>
        <begin position="74"/>
        <end position="94"/>
    </location>
</feature>
<feature type="transmembrane region" description="Helical" evidence="3">
    <location>
        <begin position="120"/>
        <end position="140"/>
    </location>
</feature>
<feature type="transmembrane region" description="Helical" evidence="3">
    <location>
        <begin position="168"/>
        <end position="188"/>
    </location>
</feature>
<feature type="transmembrane region" description="Helical" evidence="3">
    <location>
        <begin position="195"/>
        <end position="215"/>
    </location>
</feature>
<feature type="transmembrane region" description="Helical" evidence="3">
    <location>
        <begin position="234"/>
        <end position="256"/>
    </location>
</feature>
<feature type="transmembrane region" description="Helical" evidence="3">
    <location>
        <begin position="272"/>
        <end position="292"/>
    </location>
</feature>
<feature type="transmembrane region" description="Helical" evidence="3">
    <location>
        <begin position="309"/>
        <end position="329"/>
    </location>
</feature>
<feature type="transmembrane region" description="Helical" evidence="3">
    <location>
        <begin position="361"/>
        <end position="381"/>
    </location>
</feature>
<feature type="transmembrane region" description="Helical" evidence="3">
    <location>
        <begin position="385"/>
        <end position="405"/>
    </location>
</feature>
<feature type="transmembrane region" description="Helical" evidence="3">
    <location>
        <begin position="419"/>
        <end position="439"/>
    </location>
</feature>